<name>ACCD_SALEP</name>
<gene>
    <name evidence="1" type="primary">accD</name>
    <name type="ordered locus">SEN2348</name>
</gene>
<comment type="function">
    <text evidence="1">Component of the acetyl coenzyme A carboxylase (ACC) complex. Biotin carboxylase (BC) catalyzes the carboxylation of biotin on its carrier protein (BCCP) and then the CO(2) group is transferred by the transcarboxylase to acetyl-CoA to form malonyl-CoA.</text>
</comment>
<comment type="catalytic activity">
    <reaction evidence="1">
        <text>N(6)-carboxybiotinyl-L-lysyl-[protein] + acetyl-CoA = N(6)-biotinyl-L-lysyl-[protein] + malonyl-CoA</text>
        <dbReference type="Rhea" id="RHEA:54728"/>
        <dbReference type="Rhea" id="RHEA-COMP:10505"/>
        <dbReference type="Rhea" id="RHEA-COMP:10506"/>
        <dbReference type="ChEBI" id="CHEBI:57288"/>
        <dbReference type="ChEBI" id="CHEBI:57384"/>
        <dbReference type="ChEBI" id="CHEBI:83144"/>
        <dbReference type="ChEBI" id="CHEBI:83145"/>
        <dbReference type="EC" id="2.1.3.15"/>
    </reaction>
</comment>
<comment type="cofactor">
    <cofactor evidence="1">
        <name>Zn(2+)</name>
        <dbReference type="ChEBI" id="CHEBI:29105"/>
    </cofactor>
    <text evidence="1">Binds 1 zinc ion per subunit.</text>
</comment>
<comment type="pathway">
    <text evidence="1">Lipid metabolism; malonyl-CoA biosynthesis; malonyl-CoA from acetyl-CoA: step 1/1.</text>
</comment>
<comment type="subunit">
    <text evidence="1">Acetyl-CoA carboxylase is a heterohexamer composed of biotin carboxyl carrier protein (AccB), biotin carboxylase (AccC) and two subunits each of ACCase subunit alpha (AccA) and ACCase subunit beta (AccD).</text>
</comment>
<comment type="subcellular location">
    <subcellularLocation>
        <location evidence="1">Cytoplasm</location>
    </subcellularLocation>
</comment>
<comment type="similarity">
    <text evidence="1">Belongs to the AccD/PCCB family.</text>
</comment>
<protein>
    <recommendedName>
        <fullName evidence="1">Acetyl-coenzyme A carboxylase carboxyl transferase subunit beta</fullName>
        <shortName evidence="1">ACCase subunit beta</shortName>
        <shortName evidence="1">Acetyl-CoA carboxylase carboxyltransferase subunit beta</shortName>
        <ecNumber evidence="1">2.1.3.15</ecNumber>
    </recommendedName>
</protein>
<proteinExistence type="inferred from homology"/>
<reference key="1">
    <citation type="journal article" date="2008" name="Genome Res.">
        <title>Comparative genome analysis of Salmonella enteritidis PT4 and Salmonella gallinarum 287/91 provides insights into evolutionary and host adaptation pathways.</title>
        <authorList>
            <person name="Thomson N.R."/>
            <person name="Clayton D.J."/>
            <person name="Windhorst D."/>
            <person name="Vernikos G."/>
            <person name="Davidson S."/>
            <person name="Churcher C."/>
            <person name="Quail M.A."/>
            <person name="Stevens M."/>
            <person name="Jones M.A."/>
            <person name="Watson M."/>
            <person name="Barron A."/>
            <person name="Layton A."/>
            <person name="Pickard D."/>
            <person name="Kingsley R.A."/>
            <person name="Bignell A."/>
            <person name="Clark L."/>
            <person name="Harris B."/>
            <person name="Ormond D."/>
            <person name="Abdellah Z."/>
            <person name="Brooks K."/>
            <person name="Cherevach I."/>
            <person name="Chillingworth T."/>
            <person name="Woodward J."/>
            <person name="Norberczak H."/>
            <person name="Lord A."/>
            <person name="Arrowsmith C."/>
            <person name="Jagels K."/>
            <person name="Moule S."/>
            <person name="Mungall K."/>
            <person name="Saunders M."/>
            <person name="Whitehead S."/>
            <person name="Chabalgoity J.A."/>
            <person name="Maskell D."/>
            <person name="Humphreys T."/>
            <person name="Roberts M."/>
            <person name="Barrow P.A."/>
            <person name="Dougan G."/>
            <person name="Parkhill J."/>
        </authorList>
    </citation>
    <scope>NUCLEOTIDE SEQUENCE [LARGE SCALE GENOMIC DNA]</scope>
    <source>
        <strain>P125109</strain>
    </source>
</reference>
<feature type="chain" id="PRO_0000359052" description="Acetyl-coenzyme A carboxylase carboxyl transferase subunit beta">
    <location>
        <begin position="1"/>
        <end position="304"/>
    </location>
</feature>
<feature type="domain" description="CoA carboxyltransferase N-terminal" evidence="2">
    <location>
        <begin position="23"/>
        <end position="292"/>
    </location>
</feature>
<feature type="zinc finger region" description="C4-type" evidence="1">
    <location>
        <begin position="27"/>
        <end position="49"/>
    </location>
</feature>
<feature type="region of interest" description="Disordered" evidence="3">
    <location>
        <begin position="283"/>
        <end position="304"/>
    </location>
</feature>
<feature type="binding site" evidence="1">
    <location>
        <position position="27"/>
    </location>
    <ligand>
        <name>Zn(2+)</name>
        <dbReference type="ChEBI" id="CHEBI:29105"/>
    </ligand>
</feature>
<feature type="binding site" evidence="1">
    <location>
        <position position="30"/>
    </location>
    <ligand>
        <name>Zn(2+)</name>
        <dbReference type="ChEBI" id="CHEBI:29105"/>
    </ligand>
</feature>
<feature type="binding site" evidence="1">
    <location>
        <position position="46"/>
    </location>
    <ligand>
        <name>Zn(2+)</name>
        <dbReference type="ChEBI" id="CHEBI:29105"/>
    </ligand>
</feature>
<feature type="binding site" evidence="1">
    <location>
        <position position="49"/>
    </location>
    <ligand>
        <name>Zn(2+)</name>
        <dbReference type="ChEBI" id="CHEBI:29105"/>
    </ligand>
</feature>
<dbReference type="EC" id="2.1.3.15" evidence="1"/>
<dbReference type="EMBL" id="AM933172">
    <property type="protein sequence ID" value="CAR33932.1"/>
    <property type="molecule type" value="Genomic_DNA"/>
</dbReference>
<dbReference type="RefSeq" id="WP_000118383.1">
    <property type="nucleotide sequence ID" value="NC_011294.1"/>
</dbReference>
<dbReference type="SMR" id="B5R347"/>
<dbReference type="KEGG" id="set:SEN2348"/>
<dbReference type="HOGENOM" id="CLU_015486_1_0_6"/>
<dbReference type="UniPathway" id="UPA00655">
    <property type="reaction ID" value="UER00711"/>
</dbReference>
<dbReference type="Proteomes" id="UP000000613">
    <property type="component" value="Chromosome"/>
</dbReference>
<dbReference type="GO" id="GO:0009329">
    <property type="term" value="C:acetate CoA-transferase complex"/>
    <property type="evidence" value="ECO:0007669"/>
    <property type="project" value="TreeGrafter"/>
</dbReference>
<dbReference type="GO" id="GO:0003989">
    <property type="term" value="F:acetyl-CoA carboxylase activity"/>
    <property type="evidence" value="ECO:0007669"/>
    <property type="project" value="InterPro"/>
</dbReference>
<dbReference type="GO" id="GO:0005524">
    <property type="term" value="F:ATP binding"/>
    <property type="evidence" value="ECO:0007669"/>
    <property type="project" value="UniProtKB-KW"/>
</dbReference>
<dbReference type="GO" id="GO:0016743">
    <property type="term" value="F:carboxyl- or carbamoyltransferase activity"/>
    <property type="evidence" value="ECO:0007669"/>
    <property type="project" value="UniProtKB-UniRule"/>
</dbReference>
<dbReference type="GO" id="GO:0008270">
    <property type="term" value="F:zinc ion binding"/>
    <property type="evidence" value="ECO:0007669"/>
    <property type="project" value="UniProtKB-UniRule"/>
</dbReference>
<dbReference type="GO" id="GO:0006633">
    <property type="term" value="P:fatty acid biosynthetic process"/>
    <property type="evidence" value="ECO:0007669"/>
    <property type="project" value="UniProtKB-KW"/>
</dbReference>
<dbReference type="GO" id="GO:2001295">
    <property type="term" value="P:malonyl-CoA biosynthetic process"/>
    <property type="evidence" value="ECO:0007669"/>
    <property type="project" value="UniProtKB-UniRule"/>
</dbReference>
<dbReference type="FunFam" id="3.90.226.10:FF:000013">
    <property type="entry name" value="Acetyl-coenzyme A carboxylase carboxyl transferase subunit beta"/>
    <property type="match status" value="1"/>
</dbReference>
<dbReference type="Gene3D" id="3.90.226.10">
    <property type="entry name" value="2-enoyl-CoA Hydratase, Chain A, domain 1"/>
    <property type="match status" value="1"/>
</dbReference>
<dbReference type="HAMAP" id="MF_01395">
    <property type="entry name" value="AcetylCoA_CT_beta"/>
    <property type="match status" value="1"/>
</dbReference>
<dbReference type="InterPro" id="IPR034733">
    <property type="entry name" value="AcCoA_carboxyl_beta"/>
</dbReference>
<dbReference type="InterPro" id="IPR000438">
    <property type="entry name" value="Acetyl_CoA_COase_Trfase_b_su"/>
</dbReference>
<dbReference type="InterPro" id="IPR029045">
    <property type="entry name" value="ClpP/crotonase-like_dom_sf"/>
</dbReference>
<dbReference type="InterPro" id="IPR011762">
    <property type="entry name" value="COA_CT_N"/>
</dbReference>
<dbReference type="InterPro" id="IPR041010">
    <property type="entry name" value="Znf-ACC"/>
</dbReference>
<dbReference type="NCBIfam" id="TIGR00515">
    <property type="entry name" value="accD"/>
    <property type="match status" value="1"/>
</dbReference>
<dbReference type="PANTHER" id="PTHR42995">
    <property type="entry name" value="ACETYL-COENZYME A CARBOXYLASE CARBOXYL TRANSFERASE SUBUNIT BETA, CHLOROPLASTIC"/>
    <property type="match status" value="1"/>
</dbReference>
<dbReference type="PANTHER" id="PTHR42995:SF5">
    <property type="entry name" value="ACETYL-COENZYME A CARBOXYLASE CARBOXYL TRANSFERASE SUBUNIT BETA, CHLOROPLASTIC"/>
    <property type="match status" value="1"/>
</dbReference>
<dbReference type="Pfam" id="PF01039">
    <property type="entry name" value="Carboxyl_trans"/>
    <property type="match status" value="1"/>
</dbReference>
<dbReference type="Pfam" id="PF17848">
    <property type="entry name" value="Zn_ribbon_ACC"/>
    <property type="match status" value="1"/>
</dbReference>
<dbReference type="PRINTS" id="PR01070">
    <property type="entry name" value="ACCCTRFRASEB"/>
</dbReference>
<dbReference type="SUPFAM" id="SSF52096">
    <property type="entry name" value="ClpP/crotonase"/>
    <property type="match status" value="1"/>
</dbReference>
<dbReference type="PROSITE" id="PS50980">
    <property type="entry name" value="COA_CT_NTER"/>
    <property type="match status" value="1"/>
</dbReference>
<keyword id="KW-0067">ATP-binding</keyword>
<keyword id="KW-0963">Cytoplasm</keyword>
<keyword id="KW-0275">Fatty acid biosynthesis</keyword>
<keyword id="KW-0276">Fatty acid metabolism</keyword>
<keyword id="KW-0444">Lipid biosynthesis</keyword>
<keyword id="KW-0443">Lipid metabolism</keyword>
<keyword id="KW-0479">Metal-binding</keyword>
<keyword id="KW-0547">Nucleotide-binding</keyword>
<keyword id="KW-0808">Transferase</keyword>
<keyword id="KW-0862">Zinc</keyword>
<keyword id="KW-0863">Zinc-finger</keyword>
<sequence length="304" mass="33216">MSWIERIKSNITPTRKASIPEGVWTKCDSCGQVLYRAELERNLEVCPKCDHHMRMSARNRLHSLLDEGSLVELGSELEPKDVLKFRDSKKYKDRLASAQKETGEKDALVVMKGTLHGMPVVAAAFEFAFMGGSMGSVVGARFVRAVEQALEDNCPLVCFSASGGARMQEALMSLMQMAKTSAALAKMQERGLPYISVLTDPTMGGVSASFAMLGDLNIAEPKALIGFAGPRVIEQTVREKLPPGFQRSEFLIEKGAIDMIVRRPEMRLKLASILAKLMNLPAPNPDAPREGVVVPPAPDQESEA</sequence>
<accession>B5R347</accession>
<organism>
    <name type="scientific">Salmonella enteritidis PT4 (strain P125109)</name>
    <dbReference type="NCBI Taxonomy" id="550537"/>
    <lineage>
        <taxon>Bacteria</taxon>
        <taxon>Pseudomonadati</taxon>
        <taxon>Pseudomonadota</taxon>
        <taxon>Gammaproteobacteria</taxon>
        <taxon>Enterobacterales</taxon>
        <taxon>Enterobacteriaceae</taxon>
        <taxon>Salmonella</taxon>
    </lineage>
</organism>
<evidence type="ECO:0000255" key="1">
    <source>
        <dbReference type="HAMAP-Rule" id="MF_01395"/>
    </source>
</evidence>
<evidence type="ECO:0000255" key="2">
    <source>
        <dbReference type="PROSITE-ProRule" id="PRU01136"/>
    </source>
</evidence>
<evidence type="ECO:0000256" key="3">
    <source>
        <dbReference type="SAM" id="MobiDB-lite"/>
    </source>
</evidence>